<dbReference type="EMBL" id="CP000243">
    <property type="protein sequence ID" value="ABE09644.1"/>
    <property type="status" value="ALT_INIT"/>
    <property type="molecule type" value="Genomic_DNA"/>
</dbReference>
<dbReference type="RefSeq" id="WP_001297978.1">
    <property type="nucleotide sequence ID" value="NZ_CP064825.1"/>
</dbReference>
<dbReference type="SMR" id="Q1R4S0"/>
<dbReference type="KEGG" id="eci:UTI89_C4217"/>
<dbReference type="HOGENOM" id="CLU_159877_2_0_6"/>
<dbReference type="Proteomes" id="UP000001952">
    <property type="component" value="Chromosome"/>
</dbReference>
<dbReference type="InterPro" id="IPR048144">
    <property type="entry name" value="YicS_fam"/>
</dbReference>
<dbReference type="NCBIfam" id="NF041639">
    <property type="entry name" value="YicS_fam"/>
    <property type="match status" value="1"/>
</dbReference>
<sequence length="97" mass="11061">MKPTMLLMITVFLIFPAISQAESPFSSLQSAKEKTTVLQDLRKICTPQASLSDEAWEKLMLSDENNKQHIREAIVAMERNNQSNYWEALGKVECPDM</sequence>
<proteinExistence type="predicted"/>
<accession>Q1R4S0</accession>
<reference key="1">
    <citation type="journal article" date="2006" name="Proc. Natl. Acad. Sci. U.S.A.">
        <title>Identification of genes subject to positive selection in uropathogenic strains of Escherichia coli: a comparative genomics approach.</title>
        <authorList>
            <person name="Chen S.L."/>
            <person name="Hung C.-S."/>
            <person name="Xu J."/>
            <person name="Reigstad C.S."/>
            <person name="Magrini V."/>
            <person name="Sabo A."/>
            <person name="Blasiar D."/>
            <person name="Bieri T."/>
            <person name="Meyer R.R."/>
            <person name="Ozersky P."/>
            <person name="Armstrong J.R."/>
            <person name="Fulton R.S."/>
            <person name="Latreille J.P."/>
            <person name="Spieth J."/>
            <person name="Hooton T.M."/>
            <person name="Mardis E.R."/>
            <person name="Hultgren S.J."/>
            <person name="Gordon J.I."/>
        </authorList>
    </citation>
    <scope>NUCLEOTIDE SEQUENCE [LARGE SCALE GENOMIC DNA]</scope>
    <source>
        <strain>UTI89 / UPEC</strain>
    </source>
</reference>
<protein>
    <recommendedName>
        <fullName>Uncharacterized protein YicS</fullName>
    </recommendedName>
</protein>
<comment type="sequence caution" evidence="1">
    <conflict type="erroneous initiation">
        <sequence resource="EMBL-CDS" id="ABE09644"/>
    </conflict>
</comment>
<name>YICS_ECOUT</name>
<evidence type="ECO:0000305" key="1"/>
<organism>
    <name type="scientific">Escherichia coli (strain UTI89 / UPEC)</name>
    <dbReference type="NCBI Taxonomy" id="364106"/>
    <lineage>
        <taxon>Bacteria</taxon>
        <taxon>Pseudomonadati</taxon>
        <taxon>Pseudomonadota</taxon>
        <taxon>Gammaproteobacteria</taxon>
        <taxon>Enterobacterales</taxon>
        <taxon>Enterobacteriaceae</taxon>
        <taxon>Escherichia</taxon>
    </lineage>
</organism>
<gene>
    <name type="primary">yicS</name>
    <name type="ordered locus">UTI89_C4217</name>
</gene>
<feature type="chain" id="PRO_0000262294" description="Uncharacterized protein YicS">
    <location>
        <begin position="1"/>
        <end position="97"/>
    </location>
</feature>